<accession>Q86WW8</accession>
<dbReference type="EMBL" id="AC010134">
    <property type="protein sequence ID" value="AAX93231.1"/>
    <property type="molecule type" value="Genomic_DNA"/>
</dbReference>
<dbReference type="EMBL" id="CH471127">
    <property type="protein sequence ID" value="EAX01903.1"/>
    <property type="molecule type" value="Genomic_DNA"/>
</dbReference>
<dbReference type="EMBL" id="BC047722">
    <property type="protein sequence ID" value="AAH47722.1"/>
    <property type="molecule type" value="mRNA"/>
</dbReference>
<dbReference type="CCDS" id="CCDS33257.1"/>
<dbReference type="RefSeq" id="NP_001008216.1">
    <property type="nucleotide sequence ID" value="NM_001008215.3"/>
</dbReference>
<dbReference type="SMR" id="Q86WW8"/>
<dbReference type="BioGRID" id="138902">
    <property type="interactions" value="29"/>
</dbReference>
<dbReference type="FunCoup" id="Q86WW8">
    <property type="interactions" value="951"/>
</dbReference>
<dbReference type="IntAct" id="Q86WW8">
    <property type="interactions" value="20"/>
</dbReference>
<dbReference type="MINT" id="Q86WW8"/>
<dbReference type="STRING" id="9606.ENSP00000330730"/>
<dbReference type="iPTMnet" id="Q86WW8"/>
<dbReference type="PhosphoSitePlus" id="Q86WW8"/>
<dbReference type="BioMuta" id="COA5"/>
<dbReference type="DMDM" id="74727729"/>
<dbReference type="jPOST" id="Q86WW8"/>
<dbReference type="MassIVE" id="Q86WW8"/>
<dbReference type="PaxDb" id="9606-ENSP00000330730"/>
<dbReference type="PeptideAtlas" id="Q86WW8"/>
<dbReference type="ProteomicsDB" id="70213"/>
<dbReference type="Pumba" id="Q86WW8"/>
<dbReference type="Antibodypedia" id="71495">
    <property type="antibodies" value="7 antibodies from 7 providers"/>
</dbReference>
<dbReference type="DNASU" id="493753"/>
<dbReference type="Ensembl" id="ENST00000328709.8">
    <property type="protein sequence ID" value="ENSP00000330730.3"/>
    <property type="gene ID" value="ENSG00000183513.9"/>
</dbReference>
<dbReference type="GeneID" id="493753"/>
<dbReference type="KEGG" id="hsa:493753"/>
<dbReference type="MANE-Select" id="ENST00000328709.8">
    <property type="protein sequence ID" value="ENSP00000330730.3"/>
    <property type="RefSeq nucleotide sequence ID" value="NM_001008215.3"/>
    <property type="RefSeq protein sequence ID" value="NP_001008216.1"/>
</dbReference>
<dbReference type="UCSC" id="uc002syz.4">
    <property type="organism name" value="human"/>
</dbReference>
<dbReference type="AGR" id="HGNC:33848"/>
<dbReference type="CTD" id="493753"/>
<dbReference type="DisGeNET" id="493753"/>
<dbReference type="GeneCards" id="COA5"/>
<dbReference type="HGNC" id="HGNC:33848">
    <property type="gene designation" value="COA5"/>
</dbReference>
<dbReference type="HPA" id="ENSG00000183513">
    <property type="expression patterns" value="Low tissue specificity"/>
</dbReference>
<dbReference type="MalaCards" id="COA5"/>
<dbReference type="MIM" id="613920">
    <property type="type" value="gene"/>
</dbReference>
<dbReference type="MIM" id="616500">
    <property type="type" value="phenotype"/>
</dbReference>
<dbReference type="neXtProt" id="NX_Q86WW8"/>
<dbReference type="OpenTargets" id="ENSG00000183513"/>
<dbReference type="Orphanet" id="1561">
    <property type="disease" value="Fatal infantile cytochrome C oxidase deficiency"/>
</dbReference>
<dbReference type="PharmGKB" id="PA162379390"/>
<dbReference type="VEuPathDB" id="HostDB:ENSG00000183513"/>
<dbReference type="eggNOG" id="KOG4114">
    <property type="taxonomic scope" value="Eukaryota"/>
</dbReference>
<dbReference type="GeneTree" id="ENSGT00390000005548"/>
<dbReference type="HOGENOM" id="CLU_138069_2_2_1"/>
<dbReference type="InParanoid" id="Q86WW8"/>
<dbReference type="OMA" id="KKTPKEC"/>
<dbReference type="OrthoDB" id="282149at2759"/>
<dbReference type="PAN-GO" id="Q86WW8">
    <property type="GO annotations" value="2 GO annotations based on evolutionary models"/>
</dbReference>
<dbReference type="PhylomeDB" id="Q86WW8"/>
<dbReference type="TreeFam" id="TF313953"/>
<dbReference type="PathwayCommons" id="Q86WW8"/>
<dbReference type="Reactome" id="R-HSA-9864848">
    <property type="pathway name" value="Complex IV assembly"/>
</dbReference>
<dbReference type="SignaLink" id="Q86WW8"/>
<dbReference type="BioGRID-ORCS" id="493753">
    <property type="hits" value="293 hits in 1154 CRISPR screens"/>
</dbReference>
<dbReference type="GenomeRNAi" id="493753"/>
<dbReference type="Pharos" id="Q86WW8">
    <property type="development level" value="Tdark"/>
</dbReference>
<dbReference type="PRO" id="PR:Q86WW8"/>
<dbReference type="Proteomes" id="UP000005640">
    <property type="component" value="Chromosome 2"/>
</dbReference>
<dbReference type="RNAct" id="Q86WW8">
    <property type="molecule type" value="protein"/>
</dbReference>
<dbReference type="Bgee" id="ENSG00000183513">
    <property type="expression patterns" value="Expressed in C1 segment of cervical spinal cord and 180 other cell types or tissues"/>
</dbReference>
<dbReference type="ExpressionAtlas" id="Q86WW8">
    <property type="expression patterns" value="baseline and differential"/>
</dbReference>
<dbReference type="GO" id="GO:0005743">
    <property type="term" value="C:mitochondrial inner membrane"/>
    <property type="evidence" value="ECO:0000304"/>
    <property type="project" value="Reactome"/>
</dbReference>
<dbReference type="GO" id="GO:0005739">
    <property type="term" value="C:mitochondrion"/>
    <property type="evidence" value="ECO:0006056"/>
    <property type="project" value="FlyBase"/>
</dbReference>
<dbReference type="GO" id="GO:0002521">
    <property type="term" value="P:leukocyte differentiation"/>
    <property type="evidence" value="ECO:0007669"/>
    <property type="project" value="Ensembl"/>
</dbReference>
<dbReference type="GO" id="GO:0033617">
    <property type="term" value="P:mitochondrial cytochrome c oxidase assembly"/>
    <property type="evidence" value="ECO:0000318"/>
    <property type="project" value="GO_Central"/>
</dbReference>
<dbReference type="GO" id="GO:0035264">
    <property type="term" value="P:multicellular organism growth"/>
    <property type="evidence" value="ECO:0007669"/>
    <property type="project" value="Ensembl"/>
</dbReference>
<dbReference type="GO" id="GO:0048536">
    <property type="term" value="P:spleen development"/>
    <property type="evidence" value="ECO:0007669"/>
    <property type="project" value="Ensembl"/>
</dbReference>
<dbReference type="GO" id="GO:0048538">
    <property type="term" value="P:thymus development"/>
    <property type="evidence" value="ECO:0007669"/>
    <property type="project" value="Ensembl"/>
</dbReference>
<dbReference type="InterPro" id="IPR018793">
    <property type="entry name" value="Cyt_c_oxidase_assmbl_Pet191"/>
</dbReference>
<dbReference type="PANTHER" id="PTHR28627">
    <property type="entry name" value="CYTOCHROME C OXIDASE ASSEMBLY FACTOR 5"/>
    <property type="match status" value="1"/>
</dbReference>
<dbReference type="PANTHER" id="PTHR28627:SF1">
    <property type="entry name" value="CYTOCHROME C OXIDASE ASSEMBLY FACTOR 5"/>
    <property type="match status" value="1"/>
</dbReference>
<dbReference type="Pfam" id="PF10203">
    <property type="entry name" value="Pet191_N"/>
    <property type="match status" value="1"/>
</dbReference>
<dbReference type="PROSITE" id="PS51808">
    <property type="entry name" value="CHCH"/>
    <property type="match status" value="1"/>
</dbReference>
<organism>
    <name type="scientific">Homo sapiens</name>
    <name type="common">Human</name>
    <dbReference type="NCBI Taxonomy" id="9606"/>
    <lineage>
        <taxon>Eukaryota</taxon>
        <taxon>Metazoa</taxon>
        <taxon>Chordata</taxon>
        <taxon>Craniata</taxon>
        <taxon>Vertebrata</taxon>
        <taxon>Euteleostomi</taxon>
        <taxon>Mammalia</taxon>
        <taxon>Eutheria</taxon>
        <taxon>Euarchontoglires</taxon>
        <taxon>Primates</taxon>
        <taxon>Haplorrhini</taxon>
        <taxon>Catarrhini</taxon>
        <taxon>Hominidae</taxon>
        <taxon>Homo</taxon>
    </lineage>
</organism>
<evidence type="ECO:0000255" key="1">
    <source>
        <dbReference type="PROSITE-ProRule" id="PRU01150"/>
    </source>
</evidence>
<evidence type="ECO:0000269" key="2">
    <source>
    </source>
</evidence>
<evidence type="ECO:0000305" key="3"/>
<evidence type="ECO:0007744" key="4">
    <source>
    </source>
</evidence>
<name>COA5_HUMAN</name>
<reference key="1">
    <citation type="journal article" date="2005" name="Nature">
        <title>Generation and annotation of the DNA sequences of human chromosomes 2 and 4.</title>
        <authorList>
            <person name="Hillier L.W."/>
            <person name="Graves T.A."/>
            <person name="Fulton R.S."/>
            <person name="Fulton L.A."/>
            <person name="Pepin K.H."/>
            <person name="Minx P."/>
            <person name="Wagner-McPherson C."/>
            <person name="Layman D."/>
            <person name="Wylie K."/>
            <person name="Sekhon M."/>
            <person name="Becker M.C."/>
            <person name="Fewell G.A."/>
            <person name="Delehaunty K.D."/>
            <person name="Miner T.L."/>
            <person name="Nash W.E."/>
            <person name="Kremitzki C."/>
            <person name="Oddy L."/>
            <person name="Du H."/>
            <person name="Sun H."/>
            <person name="Bradshaw-Cordum H."/>
            <person name="Ali J."/>
            <person name="Carter J."/>
            <person name="Cordes M."/>
            <person name="Harris A."/>
            <person name="Isak A."/>
            <person name="van Brunt A."/>
            <person name="Nguyen C."/>
            <person name="Du F."/>
            <person name="Courtney L."/>
            <person name="Kalicki J."/>
            <person name="Ozersky P."/>
            <person name="Abbott S."/>
            <person name="Armstrong J."/>
            <person name="Belter E.A."/>
            <person name="Caruso L."/>
            <person name="Cedroni M."/>
            <person name="Cotton M."/>
            <person name="Davidson T."/>
            <person name="Desai A."/>
            <person name="Elliott G."/>
            <person name="Erb T."/>
            <person name="Fronick C."/>
            <person name="Gaige T."/>
            <person name="Haakenson W."/>
            <person name="Haglund K."/>
            <person name="Holmes A."/>
            <person name="Harkins R."/>
            <person name="Kim K."/>
            <person name="Kruchowski S.S."/>
            <person name="Strong C.M."/>
            <person name="Grewal N."/>
            <person name="Goyea E."/>
            <person name="Hou S."/>
            <person name="Levy A."/>
            <person name="Martinka S."/>
            <person name="Mead K."/>
            <person name="McLellan M.D."/>
            <person name="Meyer R."/>
            <person name="Randall-Maher J."/>
            <person name="Tomlinson C."/>
            <person name="Dauphin-Kohlberg S."/>
            <person name="Kozlowicz-Reilly A."/>
            <person name="Shah N."/>
            <person name="Swearengen-Shahid S."/>
            <person name="Snider J."/>
            <person name="Strong J.T."/>
            <person name="Thompson J."/>
            <person name="Yoakum M."/>
            <person name="Leonard S."/>
            <person name="Pearman C."/>
            <person name="Trani L."/>
            <person name="Radionenko M."/>
            <person name="Waligorski J.E."/>
            <person name="Wang C."/>
            <person name="Rock S.M."/>
            <person name="Tin-Wollam A.-M."/>
            <person name="Maupin R."/>
            <person name="Latreille P."/>
            <person name="Wendl M.C."/>
            <person name="Yang S.-P."/>
            <person name="Pohl C."/>
            <person name="Wallis J.W."/>
            <person name="Spieth J."/>
            <person name="Bieri T.A."/>
            <person name="Berkowicz N."/>
            <person name="Nelson J.O."/>
            <person name="Osborne J."/>
            <person name="Ding L."/>
            <person name="Meyer R."/>
            <person name="Sabo A."/>
            <person name="Shotland Y."/>
            <person name="Sinha P."/>
            <person name="Wohldmann P.E."/>
            <person name="Cook L.L."/>
            <person name="Hickenbotham M.T."/>
            <person name="Eldred J."/>
            <person name="Williams D."/>
            <person name="Jones T.A."/>
            <person name="She X."/>
            <person name="Ciccarelli F.D."/>
            <person name="Izaurralde E."/>
            <person name="Taylor J."/>
            <person name="Schmutz J."/>
            <person name="Myers R.M."/>
            <person name="Cox D.R."/>
            <person name="Huang X."/>
            <person name="McPherson J.D."/>
            <person name="Mardis E.R."/>
            <person name="Clifton S.W."/>
            <person name="Warren W.C."/>
            <person name="Chinwalla A.T."/>
            <person name="Eddy S.R."/>
            <person name="Marra M.A."/>
            <person name="Ovcharenko I."/>
            <person name="Furey T.S."/>
            <person name="Miller W."/>
            <person name="Eichler E.E."/>
            <person name="Bork P."/>
            <person name="Suyama M."/>
            <person name="Torrents D."/>
            <person name="Waterston R.H."/>
            <person name="Wilson R.K."/>
        </authorList>
    </citation>
    <scope>NUCLEOTIDE SEQUENCE [LARGE SCALE GENOMIC DNA]</scope>
</reference>
<reference key="2">
    <citation type="submission" date="2005-09" db="EMBL/GenBank/DDBJ databases">
        <authorList>
            <person name="Mural R.J."/>
            <person name="Istrail S."/>
            <person name="Sutton G.G."/>
            <person name="Florea L."/>
            <person name="Halpern A.L."/>
            <person name="Mobarry C.M."/>
            <person name="Lippert R."/>
            <person name="Walenz B."/>
            <person name="Shatkay H."/>
            <person name="Dew I."/>
            <person name="Miller J.R."/>
            <person name="Flanigan M.J."/>
            <person name="Edwards N.J."/>
            <person name="Bolanos R."/>
            <person name="Fasulo D."/>
            <person name="Halldorsson B.V."/>
            <person name="Hannenhalli S."/>
            <person name="Turner R."/>
            <person name="Yooseph S."/>
            <person name="Lu F."/>
            <person name="Nusskern D.R."/>
            <person name="Shue B.C."/>
            <person name="Zheng X.H."/>
            <person name="Zhong F."/>
            <person name="Delcher A.L."/>
            <person name="Huson D.H."/>
            <person name="Kravitz S.A."/>
            <person name="Mouchard L."/>
            <person name="Reinert K."/>
            <person name="Remington K.A."/>
            <person name="Clark A.G."/>
            <person name="Waterman M.S."/>
            <person name="Eichler E.E."/>
            <person name="Adams M.D."/>
            <person name="Hunkapiller M.W."/>
            <person name="Myers E.W."/>
            <person name="Venter J.C."/>
        </authorList>
    </citation>
    <scope>NUCLEOTIDE SEQUENCE [LARGE SCALE GENOMIC DNA]</scope>
</reference>
<reference key="3">
    <citation type="journal article" date="2004" name="Genome Res.">
        <title>The status, quality, and expansion of the NIH full-length cDNA project: the Mammalian Gene Collection (MGC).</title>
        <authorList>
            <consortium name="The MGC Project Team"/>
        </authorList>
    </citation>
    <scope>NUCLEOTIDE SEQUENCE [LARGE SCALE MRNA]</scope>
    <source>
        <tissue>Pancreas</tissue>
    </source>
</reference>
<reference key="4">
    <citation type="journal article" date="2011" name="Am. J. Hum. Genet.">
        <title>A mutation in C2orf64 causes impaired cytochrome c oxidase assembly and mitochondrial cardiomyopathy.</title>
        <authorList>
            <person name="Huigsloot M."/>
            <person name="Nijtmans L.G."/>
            <person name="Szklarczyk R."/>
            <person name="Baars M.J."/>
            <person name="van den Brand M.A."/>
            <person name="Hendriksfranssen M.G."/>
            <person name="van den Heuvel L.P."/>
            <person name="Smeitink J.A."/>
            <person name="Huynen M.A."/>
            <person name="Rodenburg R.J."/>
        </authorList>
    </citation>
    <scope>FUNCTION</scope>
    <scope>INVOLVEMENT IN MC4DN9</scope>
    <scope>VARIANT MC4DN9 PRO-53</scope>
</reference>
<reference key="5">
    <citation type="journal article" date="2013" name="J. Proteome Res.">
        <title>Toward a comprehensive characterization of a human cancer cell phosphoproteome.</title>
        <authorList>
            <person name="Zhou H."/>
            <person name="Di Palma S."/>
            <person name="Preisinger C."/>
            <person name="Peng M."/>
            <person name="Polat A.N."/>
            <person name="Heck A.J."/>
            <person name="Mohammed S."/>
        </authorList>
    </citation>
    <scope>PHOSPHORYLATION [LARGE SCALE ANALYSIS] AT SER-37</scope>
    <scope>IDENTIFICATION BY MASS SPECTROMETRY [LARGE SCALE ANALYSIS]</scope>
    <source>
        <tissue>Erythroleukemia</tissue>
    </source>
</reference>
<sequence>MPKYYEDKPQGGACAGLKEDLGACLLQSDCVVQEGKSPRQCLKEGYCNSLKYAFFECKRSVLDNRARFRGRKGY</sequence>
<gene>
    <name type="primary">COA5</name>
    <name type="synonym">C2orf64</name>
</gene>
<feature type="chain" id="PRO_0000325876" description="Cytochrome c oxidase assembly factor 5">
    <location>
        <begin position="1"/>
        <end position="74"/>
    </location>
</feature>
<feature type="domain" description="CHCH" evidence="1">
    <location>
        <begin position="27"/>
        <end position="65"/>
    </location>
</feature>
<feature type="short sequence motif" description="Cx10C motif" evidence="1">
    <location>
        <begin position="30"/>
        <end position="41"/>
    </location>
</feature>
<feature type="short sequence motif" description="Cx9C motif" evidence="1">
    <location>
        <begin position="47"/>
        <end position="57"/>
    </location>
</feature>
<feature type="modified residue" description="Phosphoserine" evidence="4">
    <location>
        <position position="37"/>
    </location>
</feature>
<feature type="disulfide bond" evidence="1">
    <location>
        <begin position="30"/>
        <end position="57"/>
    </location>
</feature>
<feature type="disulfide bond" evidence="1">
    <location>
        <begin position="41"/>
        <end position="47"/>
    </location>
</feature>
<feature type="sequence variant" id="VAR_065499" description="In MC4DN9; dbSNP:rs387907099." evidence="2">
    <original>A</original>
    <variation>P</variation>
    <location>
        <position position="53"/>
    </location>
</feature>
<keyword id="KW-0225">Disease variant</keyword>
<keyword id="KW-1015">Disulfide bond</keyword>
<keyword id="KW-0597">Phosphoprotein</keyword>
<keyword id="KW-1274">Primary mitochondrial disease</keyword>
<keyword id="KW-1267">Proteomics identification</keyword>
<keyword id="KW-1185">Reference proteome</keyword>
<comment type="function">
    <text evidence="2">Involved in an early step of the mitochondrial complex IV assembly process.</text>
</comment>
<comment type="interaction">
    <interactant intactId="EBI-5458774">
        <id>Q86WW8</id>
    </interactant>
    <interactant intactId="EBI-3867333">
        <id>A8MQ03</id>
        <label>CYSRT1</label>
    </interactant>
    <organismsDiffer>false</organismsDiffer>
    <experiments>3</experiments>
</comment>
<comment type="interaction">
    <interactant intactId="EBI-5458774">
        <id>Q86WW8</id>
    </interactant>
    <interactant intactId="EBI-948001">
        <id>Q15323</id>
        <label>KRT31</label>
    </interactant>
    <organismsDiffer>false</organismsDiffer>
    <experiments>3</experiments>
</comment>
<comment type="interaction">
    <interactant intactId="EBI-5458774">
        <id>Q86WW8</id>
    </interactant>
    <interactant intactId="EBI-11749135">
        <id>Q8IUG1</id>
        <label>KRTAP1-3</label>
    </interactant>
    <organismsDiffer>false</organismsDiffer>
    <experiments>3</experiments>
</comment>
<comment type="interaction">
    <interactant intactId="EBI-5458774">
        <id>Q86WW8</id>
    </interactant>
    <interactant intactId="EBI-13636688">
        <id>P15884-3</id>
        <label>TCF4</label>
    </interactant>
    <organismsDiffer>false</organismsDiffer>
    <experiments>3</experiments>
</comment>
<comment type="disease" evidence="2">
    <disease id="DI-04506">
        <name>Mitochondrial complex IV deficiency, nuclear type 9</name>
        <acronym>MC4DN9</acronym>
        <description>An autosomal recessive, infantile disorder with a fatal course in the first weeks of life, and characterized by hypertrophic cardiomyopathy and mitochondrial complex IV deficiency. Postmortem microscopic investigations show accumulation of lipid droplets in cardiomyocytes and mitochondrial proliferation.</description>
        <dbReference type="MIM" id="616500"/>
    </disease>
    <text>The disease is caused by variants affecting the gene represented in this entry.</text>
</comment>
<comment type="similarity">
    <text evidence="3">Belongs to the PET191 family.</text>
</comment>
<proteinExistence type="evidence at protein level"/>
<protein>
    <recommendedName>
        <fullName>Cytochrome c oxidase assembly factor 5</fullName>
    </recommendedName>
</protein>